<feature type="chain" id="PRO_0000298377" description="Disulfide bond formation protein B">
    <location>
        <begin position="1"/>
        <end position="176"/>
    </location>
</feature>
<feature type="topological domain" description="Cytoplasmic" evidence="1">
    <location>
        <begin position="1"/>
        <end position="13"/>
    </location>
</feature>
<feature type="transmembrane region" description="Helical" evidence="1">
    <location>
        <begin position="14"/>
        <end position="30"/>
    </location>
</feature>
<feature type="topological domain" description="Periplasmic" evidence="1">
    <location>
        <begin position="31"/>
        <end position="48"/>
    </location>
</feature>
<feature type="transmembrane region" description="Helical" evidence="1">
    <location>
        <begin position="49"/>
        <end position="64"/>
    </location>
</feature>
<feature type="topological domain" description="Cytoplasmic" evidence="1">
    <location>
        <begin position="65"/>
        <end position="71"/>
    </location>
</feature>
<feature type="transmembrane region" description="Helical" evidence="1">
    <location>
        <begin position="72"/>
        <end position="89"/>
    </location>
</feature>
<feature type="topological domain" description="Periplasmic" evidence="1">
    <location>
        <begin position="90"/>
        <end position="144"/>
    </location>
</feature>
<feature type="transmembrane region" description="Helical" evidence="1">
    <location>
        <begin position="145"/>
        <end position="163"/>
    </location>
</feature>
<feature type="topological domain" description="Cytoplasmic" evidence="1">
    <location>
        <begin position="164"/>
        <end position="176"/>
    </location>
</feature>
<feature type="disulfide bond" description="Redox-active" evidence="1">
    <location>
        <begin position="40"/>
        <end position="43"/>
    </location>
</feature>
<feature type="disulfide bond" description="Redox-active" evidence="1">
    <location>
        <begin position="104"/>
        <end position="130"/>
    </location>
</feature>
<comment type="function">
    <text evidence="1">Required for disulfide bond formation in some periplasmic proteins. Acts by oxidizing the DsbA protein.</text>
</comment>
<comment type="subcellular location">
    <subcellularLocation>
        <location evidence="1">Cell inner membrane</location>
        <topology evidence="1">Multi-pass membrane protein</topology>
    </subcellularLocation>
</comment>
<comment type="similarity">
    <text evidence="1">Belongs to the DsbB family.</text>
</comment>
<sequence length="176" mass="19863">MQFLNTFSKSRISWLLLLLCIVFFEGSALFFQHGMKLGPCVMCIYERVAMMGIAFAALLGAIAPQYAIIRWAGLIAWGYSAVRGLQLSIEHVGYQFNPSPFATCDLFVQFPNWAPLNKWVPWMFEAYGNCAEVVWTFLGQSMPQWLVIIFAGNLVALALIVIAQFFSKKTNTILDM</sequence>
<evidence type="ECO:0000255" key="1">
    <source>
        <dbReference type="HAMAP-Rule" id="MF_00286"/>
    </source>
</evidence>
<protein>
    <recommendedName>
        <fullName evidence="1">Disulfide bond formation protein B</fullName>
    </recommendedName>
    <alternativeName>
        <fullName evidence="1">Disulfide oxidoreductase</fullName>
    </alternativeName>
</protein>
<reference key="1">
    <citation type="journal article" date="2005" name="Science">
        <title>Life at depth: Photobacterium profundum genome sequence and expression analysis.</title>
        <authorList>
            <person name="Vezzi A."/>
            <person name="Campanaro S."/>
            <person name="D'Angelo M."/>
            <person name="Simonato F."/>
            <person name="Vitulo N."/>
            <person name="Lauro F.M."/>
            <person name="Cestaro A."/>
            <person name="Malacrida G."/>
            <person name="Simionati B."/>
            <person name="Cannata N."/>
            <person name="Romualdi C."/>
            <person name="Bartlett D.H."/>
            <person name="Valle G."/>
        </authorList>
    </citation>
    <scope>NUCLEOTIDE SEQUENCE [LARGE SCALE GENOMIC DNA]</scope>
    <source>
        <strain>ATCC BAA-1253 / SS9</strain>
    </source>
</reference>
<keyword id="KW-0997">Cell inner membrane</keyword>
<keyword id="KW-1003">Cell membrane</keyword>
<keyword id="KW-0143">Chaperone</keyword>
<keyword id="KW-1015">Disulfide bond</keyword>
<keyword id="KW-0249">Electron transport</keyword>
<keyword id="KW-0472">Membrane</keyword>
<keyword id="KW-0560">Oxidoreductase</keyword>
<keyword id="KW-0676">Redox-active center</keyword>
<keyword id="KW-1185">Reference proteome</keyword>
<keyword id="KW-0812">Transmembrane</keyword>
<keyword id="KW-1133">Transmembrane helix</keyword>
<keyword id="KW-0813">Transport</keyword>
<proteinExistence type="inferred from homology"/>
<organism>
    <name type="scientific">Photobacterium profundum (strain SS9)</name>
    <dbReference type="NCBI Taxonomy" id="298386"/>
    <lineage>
        <taxon>Bacteria</taxon>
        <taxon>Pseudomonadati</taxon>
        <taxon>Pseudomonadota</taxon>
        <taxon>Gammaproteobacteria</taxon>
        <taxon>Vibrionales</taxon>
        <taxon>Vibrionaceae</taxon>
        <taxon>Photobacterium</taxon>
    </lineage>
</organism>
<gene>
    <name evidence="1" type="primary">dsbB</name>
    <name type="ordered locus">PBPRA2610</name>
</gene>
<dbReference type="EMBL" id="CR378671">
    <property type="protein sequence ID" value="CAG20989.1"/>
    <property type="molecule type" value="Genomic_DNA"/>
</dbReference>
<dbReference type="RefSeq" id="WP_011219268.1">
    <property type="nucleotide sequence ID" value="NC_006370.1"/>
</dbReference>
<dbReference type="STRING" id="298386.PBPRA2610"/>
<dbReference type="KEGG" id="ppr:PBPRA2610"/>
<dbReference type="eggNOG" id="COG1495">
    <property type="taxonomic scope" value="Bacteria"/>
</dbReference>
<dbReference type="HOGENOM" id="CLU_098660_2_0_6"/>
<dbReference type="Proteomes" id="UP000000593">
    <property type="component" value="Chromosome 1"/>
</dbReference>
<dbReference type="GO" id="GO:0005886">
    <property type="term" value="C:plasma membrane"/>
    <property type="evidence" value="ECO:0007669"/>
    <property type="project" value="UniProtKB-SubCell"/>
</dbReference>
<dbReference type="GO" id="GO:0009055">
    <property type="term" value="F:electron transfer activity"/>
    <property type="evidence" value="ECO:0007669"/>
    <property type="project" value="UniProtKB-UniRule"/>
</dbReference>
<dbReference type="GO" id="GO:0015035">
    <property type="term" value="F:protein-disulfide reductase activity"/>
    <property type="evidence" value="ECO:0007669"/>
    <property type="project" value="UniProtKB-UniRule"/>
</dbReference>
<dbReference type="GO" id="GO:0006457">
    <property type="term" value="P:protein folding"/>
    <property type="evidence" value="ECO:0007669"/>
    <property type="project" value="InterPro"/>
</dbReference>
<dbReference type="Gene3D" id="1.20.1550.10">
    <property type="entry name" value="DsbB-like"/>
    <property type="match status" value="1"/>
</dbReference>
<dbReference type="HAMAP" id="MF_00286">
    <property type="entry name" value="DsbB"/>
    <property type="match status" value="1"/>
</dbReference>
<dbReference type="InterPro" id="IPR003752">
    <property type="entry name" value="DiS_bond_form_DsbB/BdbC"/>
</dbReference>
<dbReference type="InterPro" id="IPR022920">
    <property type="entry name" value="Disulphide_bond_form_DsbB"/>
</dbReference>
<dbReference type="InterPro" id="IPR050183">
    <property type="entry name" value="DsbB"/>
</dbReference>
<dbReference type="InterPro" id="IPR023380">
    <property type="entry name" value="DsbB-like_sf"/>
</dbReference>
<dbReference type="NCBIfam" id="NF002485">
    <property type="entry name" value="PRK01749.1"/>
    <property type="match status" value="1"/>
</dbReference>
<dbReference type="PANTHER" id="PTHR36570">
    <property type="entry name" value="DISULFIDE BOND FORMATION PROTEIN B"/>
    <property type="match status" value="1"/>
</dbReference>
<dbReference type="PANTHER" id="PTHR36570:SF2">
    <property type="entry name" value="DISULFIDE BOND FORMATION PROTEIN B"/>
    <property type="match status" value="1"/>
</dbReference>
<dbReference type="Pfam" id="PF02600">
    <property type="entry name" value="DsbB"/>
    <property type="match status" value="1"/>
</dbReference>
<dbReference type="SUPFAM" id="SSF158442">
    <property type="entry name" value="DsbB-like"/>
    <property type="match status" value="1"/>
</dbReference>
<name>DSBB_PHOPR</name>
<accession>Q6LNY7</accession>